<evidence type="ECO:0000250" key="1">
    <source>
        <dbReference type="UniProtKB" id="P04859"/>
    </source>
</evidence>
<evidence type="ECO:0000250" key="2">
    <source>
        <dbReference type="UniProtKB" id="P06162"/>
    </source>
</evidence>
<evidence type="ECO:0000250" key="3">
    <source>
        <dbReference type="UniProtKB" id="Q77M42"/>
    </source>
</evidence>
<evidence type="ECO:0000256" key="4">
    <source>
        <dbReference type="SAM" id="MobiDB-lite"/>
    </source>
</evidence>
<evidence type="ECO:0000269" key="5">
    <source>
    </source>
</evidence>
<evidence type="ECO:0000305" key="6"/>
<organism>
    <name type="scientific">Newcastle disease virus (strain Ulster/2C)</name>
    <name type="common">NDV</name>
    <dbReference type="NCBI Taxonomy" id="36411"/>
    <lineage>
        <taxon>Viruses</taxon>
        <taxon>Riboviria</taxon>
        <taxon>Orthornavirae</taxon>
        <taxon>Negarnaviricota</taxon>
        <taxon>Haploviricotina</taxon>
        <taxon>Monjiviricetes</taxon>
        <taxon>Mononegavirales</taxon>
        <taxon>Paramyxoviridae</taxon>
        <taxon>Avulavirinae</taxon>
        <taxon>Orthoavulavirus</taxon>
        <taxon>Orthoavulavirus javaense</taxon>
        <taxon>Avian paramyxovirus 1</taxon>
    </lineage>
</organism>
<proteinExistence type="inferred from homology"/>
<protein>
    <recommendedName>
        <fullName>Phosphoprotein</fullName>
        <shortName>Protein P</shortName>
    </recommendedName>
</protein>
<feature type="chain" id="PRO_0000039387" description="Phosphoprotein">
    <location>
        <begin position="1"/>
        <end position="395"/>
    </location>
</feature>
<feature type="region of interest" description="Disordered" evidence="4">
    <location>
        <begin position="34"/>
        <end position="104"/>
    </location>
</feature>
<feature type="region of interest" description="Disordered" evidence="4">
    <location>
        <begin position="126"/>
        <end position="179"/>
    </location>
</feature>
<feature type="region of interest" description="Disordered" evidence="4">
    <location>
        <begin position="192"/>
        <end position="214"/>
    </location>
</feature>
<feature type="region of interest" description="Multimerization" evidence="3">
    <location>
        <begin position="222"/>
        <end position="285"/>
    </location>
</feature>
<feature type="compositionally biased region" description="Basic and acidic residues" evidence="4">
    <location>
        <begin position="65"/>
        <end position="74"/>
    </location>
</feature>
<feature type="compositionally biased region" description="Polar residues" evidence="4">
    <location>
        <begin position="89"/>
        <end position="98"/>
    </location>
</feature>
<feature type="compositionally biased region" description="Polar residues" evidence="4">
    <location>
        <begin position="147"/>
        <end position="178"/>
    </location>
</feature>
<feature type="splice variant" id="VSP_018928" description="In isoform 29 kDa." evidence="6">
    <location>
        <begin position="1"/>
        <end position="119"/>
    </location>
</feature>
<feature type="splice variant" id="VSP_018926" description="In isoform 38 kDa." evidence="6">
    <location>
        <begin position="1"/>
        <end position="81"/>
    </location>
</feature>
<feature type="splice variant" id="VSP_018927" description="In isoform 38 kDa." evidence="6">
    <original>V</original>
    <variation>M</variation>
    <location>
        <position position="82"/>
    </location>
</feature>
<keyword id="KW-0024">Alternative initiation</keyword>
<keyword id="KW-0597">Phosphoprotein</keyword>
<keyword id="KW-0691">RNA editing</keyword>
<keyword id="KW-0693">Viral RNA replication</keyword>
<reference key="1">
    <citation type="journal article" date="1993" name="J. Gen. Virol.">
        <title>RNA editing in Newcastle disease virus.</title>
        <authorList>
            <person name="Steward M."/>
            <person name="Vipond I.B."/>
            <person name="Millar N.S."/>
            <person name="Emmerson P.T."/>
        </authorList>
    </citation>
    <scope>NUCLEOTIDE SEQUENCE [GENOMIC RNA / MRNA]</scope>
    <scope>RNA EDITING</scope>
</reference>
<comment type="function">
    <text evidence="2 3">Essential cofactor of the RNA polymerase L that plays a central role in the transcription and replication by forming the polymerase complex with RNA polymerase L and recruiting L to the genomic N-RNA template for RNA synthesis (By similarity). Also plays a central role in the encapsidation of nascent RNA chains by forming the encapsidation complex with the nucleocapsid protein N (N-P complex). Acts as a chaperone for newly synthesized free N protein, so-called N0, allowing encapsidation of nascent RNA chains during replication (By similarity). The nucleoprotein protein N prevents excessive phosphorylation of P, which leads to down-regulation of viral transcription/ replication. Participates, together with N, in the formation of viral factories (viroplasms), which are large inclusions in the host cytoplasm where replication takes place (By similarity).</text>
</comment>
<comment type="subunit">
    <text evidence="2 3">Homotetramer. Interacts (via multimerization domain) with polymerase L; this interaction forms the polymerase L-P complex (By similarity). Interacts (via N-terminus) with N0 (via Ncore); this interaction allows P to chaperon N0 to avoid N polymerization before encapsidation. Interacts (via C-terminus) with N-RNA template; this interaction positions the polymerase on the template for both transcription and replication (By similarity).</text>
</comment>
<comment type="alternative products">
    <event type="alternative initiation"/>
    <isoform>
        <id>Q06427-1</id>
        <name>Long</name>
        <sequence type="displayed"/>
    </isoform>
    <isoform>
        <id>Q06427-2</id>
        <name>38 kDa</name>
        <name>Non-structural protein C 38 kDa</name>
        <sequence type="described" ref="VSP_018926 VSP_018927"/>
    </isoform>
    <isoform>
        <id>Q06427-3</id>
        <name>29 kDa</name>
        <name>Non-structural protein C 29 kDa</name>
        <sequence type="described" ref="VSP_018928"/>
    </isoform>
</comment>
<comment type="domain">
    <text evidence="1 2 3">The N-terminus consists of a long intrinsically disordered tail. The central part contains the coiled-coil multimerization domain (PMD) (By similarity). Forms a four-stranded coiled coil structure (By similarity). The C-terminus constitutes the alpha-helical domain that binds to the nucleocapsid (N-RNA complex) (By similarity).</text>
</comment>
<comment type="RNA editing">
    <location>
        <position position="135" evidence="5"/>
    </location>
    <text>Partially edited. RNA editing at this position consists of an insertion of one guanine nucleotide. The sequence displayed here is the P protein, derived from the unedited RNA. The edited RNA version gives rise to the V protein (AC Q06428).</text>
</comment>
<comment type="similarity">
    <text evidence="6">Belongs to the rubulavirus/avulavirus P protein family.</text>
</comment>
<gene>
    <name type="primary">P/V</name>
</gene>
<accession>Q06427</accession>
<name>PHOSP_NDVU2</name>
<dbReference type="EMBL" id="Z26249">
    <property type="protein sequence ID" value="CAA81208.1"/>
    <property type="molecule type" value="Genomic_RNA"/>
</dbReference>
<dbReference type="PIR" id="JQ2392">
    <property type="entry name" value="JQ2392"/>
</dbReference>
<dbReference type="SMR" id="Q06427"/>
<dbReference type="CDD" id="cd21031">
    <property type="entry name" value="MEV_P-protein-C_like"/>
    <property type="match status" value="1"/>
</dbReference>
<dbReference type="FunFam" id="1.20.5.300:FF:000007">
    <property type="entry name" value="Phosphoprotein"/>
    <property type="match status" value="1"/>
</dbReference>
<dbReference type="Gene3D" id="1.20.5.300">
    <property type="match status" value="1"/>
</dbReference>
<dbReference type="InterPro" id="IPR004897">
    <property type="entry name" value="P/V_Pprotein_paramyxoviral"/>
</dbReference>
<dbReference type="InterPro" id="IPR025909">
    <property type="entry name" value="Soyouz_module"/>
</dbReference>
<dbReference type="Pfam" id="PF03210">
    <property type="entry name" value="Paramyx_P_V_C"/>
    <property type="match status" value="1"/>
</dbReference>
<dbReference type="Pfam" id="PF14313">
    <property type="entry name" value="Soyouz_module"/>
    <property type="match status" value="1"/>
</dbReference>
<organismHost>
    <name type="scientific">Gallus gallus</name>
    <name type="common">Chicken</name>
    <dbReference type="NCBI Taxonomy" id="9031"/>
</organismHost>
<sequence length="395" mass="42237">MATFTDAEIDELFETSGTVIDSIITAQGKPVETVGRSAIPRGKTKALSSAWEKHGSVQSPASQDTPDRQDRSDKQLSTPEQVTPHDSPPATSTDQPPTQAADEAGDTQLKTGASNSLLSMLDKLSNKSSNAKKGPWSSPQEGHHQRPTQQQGSQPSRGNSQERPQNQVKAAPGSQGTDANIAYHGQWEESQLSAGATHHALRSGQSQDNTPAPVDHVQLPVDFVQAMMSMMEAISQRVSKVDYQLDLVLKQTSSIPMMRSEIQQLKTSVAVMEANLGMMKILDPGCANVSSLSDLRAVARSHPVLVSGPGDPSPYVTQGGEMALNKLSQPVQHPSELIKPAMVSGPDIGVEKDTVRALIMSRPMHPSSSAKLLSKLDAAGSIEEIRKIKRLALNG</sequence>